<dbReference type="EC" id="2.1.1.170" evidence="1"/>
<dbReference type="EMBL" id="CP000304">
    <property type="protein sequence ID" value="ABP81823.1"/>
    <property type="molecule type" value="Genomic_DNA"/>
</dbReference>
<dbReference type="RefSeq" id="WP_011915200.1">
    <property type="nucleotide sequence ID" value="NC_009434.1"/>
</dbReference>
<dbReference type="SMR" id="A4VS72"/>
<dbReference type="KEGG" id="psa:PST_4201"/>
<dbReference type="eggNOG" id="COG0357">
    <property type="taxonomic scope" value="Bacteria"/>
</dbReference>
<dbReference type="HOGENOM" id="CLU_065341_2_0_6"/>
<dbReference type="Proteomes" id="UP000000233">
    <property type="component" value="Chromosome"/>
</dbReference>
<dbReference type="GO" id="GO:0005829">
    <property type="term" value="C:cytosol"/>
    <property type="evidence" value="ECO:0007669"/>
    <property type="project" value="TreeGrafter"/>
</dbReference>
<dbReference type="GO" id="GO:0070043">
    <property type="term" value="F:rRNA (guanine-N7-)-methyltransferase activity"/>
    <property type="evidence" value="ECO:0007669"/>
    <property type="project" value="UniProtKB-UniRule"/>
</dbReference>
<dbReference type="Gene3D" id="3.40.50.150">
    <property type="entry name" value="Vaccinia Virus protein VP39"/>
    <property type="match status" value="1"/>
</dbReference>
<dbReference type="HAMAP" id="MF_00074">
    <property type="entry name" value="16SrRNA_methyltr_G"/>
    <property type="match status" value="1"/>
</dbReference>
<dbReference type="InterPro" id="IPR003682">
    <property type="entry name" value="rRNA_ssu_MeTfrase_G"/>
</dbReference>
<dbReference type="InterPro" id="IPR029063">
    <property type="entry name" value="SAM-dependent_MTases_sf"/>
</dbReference>
<dbReference type="NCBIfam" id="TIGR00138">
    <property type="entry name" value="rsmG_gidB"/>
    <property type="match status" value="1"/>
</dbReference>
<dbReference type="PANTHER" id="PTHR31760">
    <property type="entry name" value="S-ADENOSYL-L-METHIONINE-DEPENDENT METHYLTRANSFERASES SUPERFAMILY PROTEIN"/>
    <property type="match status" value="1"/>
</dbReference>
<dbReference type="PANTHER" id="PTHR31760:SF0">
    <property type="entry name" value="S-ADENOSYL-L-METHIONINE-DEPENDENT METHYLTRANSFERASES SUPERFAMILY PROTEIN"/>
    <property type="match status" value="1"/>
</dbReference>
<dbReference type="Pfam" id="PF02527">
    <property type="entry name" value="GidB"/>
    <property type="match status" value="1"/>
</dbReference>
<dbReference type="PIRSF" id="PIRSF003078">
    <property type="entry name" value="GidB"/>
    <property type="match status" value="1"/>
</dbReference>
<dbReference type="SUPFAM" id="SSF53335">
    <property type="entry name" value="S-adenosyl-L-methionine-dependent methyltransferases"/>
    <property type="match status" value="1"/>
</dbReference>
<accession>A4VS72</accession>
<sequence length="215" mass="24127">MSLVSESHAEELVRGAGQLGIPLDDRQQRLLLAYLALLIKWNKAYNLTAVRDPDEMVSRHLLDSLSVVPFVAERGRNWLDVGSGGGMPGVPLAIMFPERAFTLLDSNGKKTRFLTQVKLELKLANLEVVHARVEQFQPSTAFDGITSRAFSSLEDFASWTRHLGNAETRWLAMKGVQPDDELQRLPEDFRLDACHVLKVPGCQGQRHLLILRRTS</sequence>
<organism>
    <name type="scientific">Stutzerimonas stutzeri (strain A1501)</name>
    <name type="common">Pseudomonas stutzeri</name>
    <dbReference type="NCBI Taxonomy" id="379731"/>
    <lineage>
        <taxon>Bacteria</taxon>
        <taxon>Pseudomonadati</taxon>
        <taxon>Pseudomonadota</taxon>
        <taxon>Gammaproteobacteria</taxon>
        <taxon>Pseudomonadales</taxon>
        <taxon>Pseudomonadaceae</taxon>
        <taxon>Stutzerimonas</taxon>
    </lineage>
</organism>
<name>RSMG_STUS1</name>
<reference key="1">
    <citation type="journal article" date="2008" name="Proc. Natl. Acad. Sci. U.S.A.">
        <title>Nitrogen fixation island and rhizosphere competence traits in the genome of root-associated Pseudomonas stutzeri A1501.</title>
        <authorList>
            <person name="Yan Y."/>
            <person name="Yang J."/>
            <person name="Dou Y."/>
            <person name="Chen M."/>
            <person name="Ping S."/>
            <person name="Peng J."/>
            <person name="Lu W."/>
            <person name="Zhang W."/>
            <person name="Yao Z."/>
            <person name="Li H."/>
            <person name="Liu W."/>
            <person name="He S."/>
            <person name="Geng L."/>
            <person name="Zhang X."/>
            <person name="Yang F."/>
            <person name="Yu H."/>
            <person name="Zhan Y."/>
            <person name="Li D."/>
            <person name="Lin Z."/>
            <person name="Wang Y."/>
            <person name="Elmerich C."/>
            <person name="Lin M."/>
            <person name="Jin Q."/>
        </authorList>
    </citation>
    <scope>NUCLEOTIDE SEQUENCE [LARGE SCALE GENOMIC DNA]</scope>
    <source>
        <strain>A1501</strain>
    </source>
</reference>
<keyword id="KW-0963">Cytoplasm</keyword>
<keyword id="KW-0489">Methyltransferase</keyword>
<keyword id="KW-1185">Reference proteome</keyword>
<keyword id="KW-0698">rRNA processing</keyword>
<keyword id="KW-0949">S-adenosyl-L-methionine</keyword>
<keyword id="KW-0808">Transferase</keyword>
<gene>
    <name evidence="1" type="primary">rsmG</name>
    <name type="ordered locus">PST_4201</name>
</gene>
<proteinExistence type="inferred from homology"/>
<evidence type="ECO:0000255" key="1">
    <source>
        <dbReference type="HAMAP-Rule" id="MF_00074"/>
    </source>
</evidence>
<protein>
    <recommendedName>
        <fullName evidence="1">Ribosomal RNA small subunit methyltransferase G</fullName>
        <ecNumber evidence="1">2.1.1.170</ecNumber>
    </recommendedName>
    <alternativeName>
        <fullName evidence="1">16S rRNA 7-methylguanosine methyltransferase</fullName>
        <shortName evidence="1">16S rRNA m7G methyltransferase</shortName>
    </alternativeName>
</protein>
<comment type="function">
    <text evidence="1">Specifically methylates the N7 position of guanine in position 527 of 16S rRNA.</text>
</comment>
<comment type="catalytic activity">
    <reaction evidence="1">
        <text>guanosine(527) in 16S rRNA + S-adenosyl-L-methionine = N(7)-methylguanosine(527) in 16S rRNA + S-adenosyl-L-homocysteine</text>
        <dbReference type="Rhea" id="RHEA:42732"/>
        <dbReference type="Rhea" id="RHEA-COMP:10209"/>
        <dbReference type="Rhea" id="RHEA-COMP:10210"/>
        <dbReference type="ChEBI" id="CHEBI:57856"/>
        <dbReference type="ChEBI" id="CHEBI:59789"/>
        <dbReference type="ChEBI" id="CHEBI:74269"/>
        <dbReference type="ChEBI" id="CHEBI:74480"/>
        <dbReference type="EC" id="2.1.1.170"/>
    </reaction>
</comment>
<comment type="subcellular location">
    <subcellularLocation>
        <location evidence="1">Cytoplasm</location>
    </subcellularLocation>
</comment>
<comment type="similarity">
    <text evidence="1">Belongs to the methyltransferase superfamily. RNA methyltransferase RsmG family.</text>
</comment>
<feature type="chain" id="PRO_1000010189" description="Ribosomal RNA small subunit methyltransferase G">
    <location>
        <begin position="1"/>
        <end position="215"/>
    </location>
</feature>
<feature type="binding site" evidence="1">
    <location>
        <position position="82"/>
    </location>
    <ligand>
        <name>S-adenosyl-L-methionine</name>
        <dbReference type="ChEBI" id="CHEBI:59789"/>
    </ligand>
</feature>
<feature type="binding site" evidence="1">
    <location>
        <position position="87"/>
    </location>
    <ligand>
        <name>S-adenosyl-L-methionine</name>
        <dbReference type="ChEBI" id="CHEBI:59789"/>
    </ligand>
</feature>
<feature type="binding site" evidence="1">
    <location>
        <begin position="133"/>
        <end position="134"/>
    </location>
    <ligand>
        <name>S-adenosyl-L-methionine</name>
        <dbReference type="ChEBI" id="CHEBI:59789"/>
    </ligand>
</feature>
<feature type="binding site" evidence="1">
    <location>
        <position position="148"/>
    </location>
    <ligand>
        <name>S-adenosyl-L-methionine</name>
        <dbReference type="ChEBI" id="CHEBI:59789"/>
    </ligand>
</feature>